<proteinExistence type="inferred from homology"/>
<gene>
    <name evidence="1" type="primary">ruvA</name>
    <name type="ordered locus">SynRCC307_1322</name>
</gene>
<comment type="function">
    <text evidence="1">The RuvA-RuvB-RuvC complex processes Holliday junction (HJ) DNA during genetic recombination and DNA repair, while the RuvA-RuvB complex plays an important role in the rescue of blocked DNA replication forks via replication fork reversal (RFR). RuvA specifically binds to HJ cruciform DNA, conferring on it an open structure. The RuvB hexamer acts as an ATP-dependent pump, pulling dsDNA into and through the RuvAB complex. HJ branch migration allows RuvC to scan DNA until it finds its consensus sequence, where it cleaves and resolves the cruciform DNA.</text>
</comment>
<comment type="subunit">
    <text evidence="1">Homotetramer. Forms an RuvA(8)-RuvB(12)-Holliday junction (HJ) complex. HJ DNA is sandwiched between 2 RuvA tetramers; dsDNA enters through RuvA and exits via RuvB. An RuvB hexamer assembles on each DNA strand where it exits the tetramer. Each RuvB hexamer is contacted by two RuvA subunits (via domain III) on 2 adjacent RuvB subunits; this complex drives branch migration. In the full resolvosome a probable DNA-RuvA(4)-RuvB(12)-RuvC(2) complex forms which resolves the HJ.</text>
</comment>
<comment type="subcellular location">
    <subcellularLocation>
        <location evidence="1">Cytoplasm</location>
    </subcellularLocation>
</comment>
<comment type="domain">
    <text evidence="1">Has three domains with a flexible linker between the domains II and III and assumes an 'L' shape. Domain III is highly mobile and contacts RuvB.</text>
</comment>
<comment type="similarity">
    <text evidence="1">Belongs to the RuvA family.</text>
</comment>
<protein>
    <recommendedName>
        <fullName evidence="1">Holliday junction branch migration complex subunit RuvA</fullName>
    </recommendedName>
</protein>
<accession>A5GTL6</accession>
<feature type="chain" id="PRO_1000002583" description="Holliday junction branch migration complex subunit RuvA">
    <location>
        <begin position="1"/>
        <end position="208"/>
    </location>
</feature>
<feature type="region of interest" description="Domain I" evidence="1">
    <location>
        <begin position="1"/>
        <end position="67"/>
    </location>
</feature>
<feature type="region of interest" description="Domain II" evidence="1">
    <location>
        <begin position="68"/>
        <end position="146"/>
    </location>
</feature>
<feature type="region of interest" description="Flexible linker" evidence="1">
    <location>
        <begin position="147"/>
        <end position="157"/>
    </location>
</feature>
<feature type="region of interest" description="Domain III" evidence="1">
    <location>
        <begin position="157"/>
        <end position="208"/>
    </location>
</feature>
<sequence length="208" mass="22935">MIGWLHGTIGDRWQEGNRCWLLLICGPVGYELQVSESLWRGTALESPTTVHTHLQQREDGQQLYGFETKADRNLFRLLISVNGVGPQVALGLISGLGAVSLLQAMAAEDVKVLCQAPGVGKRTAERLSLEWRSRLQERWQQQGGSTPLRLVEPVAESRELRATLEALGYGPEEVSAAVAQAGSQGLDPEQPMEEWLRHCLAWLSRQAG</sequence>
<evidence type="ECO:0000255" key="1">
    <source>
        <dbReference type="HAMAP-Rule" id="MF_00031"/>
    </source>
</evidence>
<reference key="1">
    <citation type="submission" date="2006-05" db="EMBL/GenBank/DDBJ databases">
        <authorList>
            <consortium name="Genoscope"/>
        </authorList>
    </citation>
    <scope>NUCLEOTIDE SEQUENCE [LARGE SCALE GENOMIC DNA]</scope>
    <source>
        <strain>RCC307</strain>
    </source>
</reference>
<name>RUVA_SYNR3</name>
<keyword id="KW-0963">Cytoplasm</keyword>
<keyword id="KW-0227">DNA damage</keyword>
<keyword id="KW-0233">DNA recombination</keyword>
<keyword id="KW-0234">DNA repair</keyword>
<keyword id="KW-0238">DNA-binding</keyword>
<keyword id="KW-1185">Reference proteome</keyword>
<organism>
    <name type="scientific">Synechococcus sp. (strain RCC307)</name>
    <dbReference type="NCBI Taxonomy" id="316278"/>
    <lineage>
        <taxon>Bacteria</taxon>
        <taxon>Bacillati</taxon>
        <taxon>Cyanobacteriota</taxon>
        <taxon>Cyanophyceae</taxon>
        <taxon>Synechococcales</taxon>
        <taxon>Synechococcaceae</taxon>
        <taxon>Synechococcus</taxon>
    </lineage>
</organism>
<dbReference type="EMBL" id="CT978603">
    <property type="protein sequence ID" value="CAK28225.1"/>
    <property type="molecule type" value="Genomic_DNA"/>
</dbReference>
<dbReference type="SMR" id="A5GTL6"/>
<dbReference type="STRING" id="316278.SynRCC307_1322"/>
<dbReference type="KEGG" id="syr:SynRCC307_1322"/>
<dbReference type="eggNOG" id="COG0632">
    <property type="taxonomic scope" value="Bacteria"/>
</dbReference>
<dbReference type="HOGENOM" id="CLU_087936_0_0_3"/>
<dbReference type="OrthoDB" id="5293449at2"/>
<dbReference type="Proteomes" id="UP000001115">
    <property type="component" value="Chromosome"/>
</dbReference>
<dbReference type="GO" id="GO:0005737">
    <property type="term" value="C:cytoplasm"/>
    <property type="evidence" value="ECO:0007669"/>
    <property type="project" value="UniProtKB-SubCell"/>
</dbReference>
<dbReference type="GO" id="GO:0009379">
    <property type="term" value="C:Holliday junction helicase complex"/>
    <property type="evidence" value="ECO:0007669"/>
    <property type="project" value="InterPro"/>
</dbReference>
<dbReference type="GO" id="GO:0048476">
    <property type="term" value="C:Holliday junction resolvase complex"/>
    <property type="evidence" value="ECO:0007669"/>
    <property type="project" value="UniProtKB-UniRule"/>
</dbReference>
<dbReference type="GO" id="GO:0005524">
    <property type="term" value="F:ATP binding"/>
    <property type="evidence" value="ECO:0007669"/>
    <property type="project" value="InterPro"/>
</dbReference>
<dbReference type="GO" id="GO:0000400">
    <property type="term" value="F:four-way junction DNA binding"/>
    <property type="evidence" value="ECO:0007669"/>
    <property type="project" value="UniProtKB-UniRule"/>
</dbReference>
<dbReference type="GO" id="GO:0009378">
    <property type="term" value="F:four-way junction helicase activity"/>
    <property type="evidence" value="ECO:0007669"/>
    <property type="project" value="InterPro"/>
</dbReference>
<dbReference type="GO" id="GO:0006310">
    <property type="term" value="P:DNA recombination"/>
    <property type="evidence" value="ECO:0007669"/>
    <property type="project" value="UniProtKB-UniRule"/>
</dbReference>
<dbReference type="GO" id="GO:0006281">
    <property type="term" value="P:DNA repair"/>
    <property type="evidence" value="ECO:0007669"/>
    <property type="project" value="UniProtKB-UniRule"/>
</dbReference>
<dbReference type="Gene3D" id="1.10.150.20">
    <property type="entry name" value="5' to 3' exonuclease, C-terminal subdomain"/>
    <property type="match status" value="1"/>
</dbReference>
<dbReference type="Gene3D" id="2.40.50.140">
    <property type="entry name" value="Nucleic acid-binding proteins"/>
    <property type="match status" value="1"/>
</dbReference>
<dbReference type="HAMAP" id="MF_00031">
    <property type="entry name" value="DNA_HJ_migration_RuvA"/>
    <property type="match status" value="1"/>
</dbReference>
<dbReference type="InterPro" id="IPR013849">
    <property type="entry name" value="DNA_helicase_Holl-junc_RuvA_I"/>
</dbReference>
<dbReference type="InterPro" id="IPR012340">
    <property type="entry name" value="NA-bd_OB-fold"/>
</dbReference>
<dbReference type="InterPro" id="IPR000085">
    <property type="entry name" value="RuvA"/>
</dbReference>
<dbReference type="InterPro" id="IPR010994">
    <property type="entry name" value="RuvA_2-like"/>
</dbReference>
<dbReference type="InterPro" id="IPR011114">
    <property type="entry name" value="RuvA_C"/>
</dbReference>
<dbReference type="InterPro" id="IPR036267">
    <property type="entry name" value="RuvA_C_sf"/>
</dbReference>
<dbReference type="NCBIfam" id="TIGR00084">
    <property type="entry name" value="ruvA"/>
    <property type="match status" value="1"/>
</dbReference>
<dbReference type="Pfam" id="PF14520">
    <property type="entry name" value="HHH_5"/>
    <property type="match status" value="1"/>
</dbReference>
<dbReference type="Pfam" id="PF07499">
    <property type="entry name" value="RuvA_C"/>
    <property type="match status" value="1"/>
</dbReference>
<dbReference type="Pfam" id="PF01330">
    <property type="entry name" value="RuvA_N"/>
    <property type="match status" value="1"/>
</dbReference>
<dbReference type="SUPFAM" id="SSF46929">
    <property type="entry name" value="DNA helicase RuvA subunit, C-terminal domain"/>
    <property type="match status" value="1"/>
</dbReference>
<dbReference type="SUPFAM" id="SSF50249">
    <property type="entry name" value="Nucleic acid-binding proteins"/>
    <property type="match status" value="1"/>
</dbReference>
<dbReference type="SUPFAM" id="SSF47781">
    <property type="entry name" value="RuvA domain 2-like"/>
    <property type="match status" value="1"/>
</dbReference>